<proteinExistence type="inferred from homology"/>
<gene>
    <name type="primary">yohJ</name>
    <name type="ordered locus">c2673</name>
</gene>
<dbReference type="EMBL" id="AE014075">
    <property type="protein sequence ID" value="AAN81129.1"/>
    <property type="status" value="ALT_INIT"/>
    <property type="molecule type" value="Genomic_DNA"/>
</dbReference>
<dbReference type="RefSeq" id="WP_001295452.1">
    <property type="nucleotide sequence ID" value="NZ_CP051263.1"/>
</dbReference>
<dbReference type="SMR" id="P60633"/>
<dbReference type="STRING" id="199310.c2673"/>
<dbReference type="KEGG" id="ecc:c2673"/>
<dbReference type="eggNOG" id="COG1380">
    <property type="taxonomic scope" value="Bacteria"/>
</dbReference>
<dbReference type="HOGENOM" id="CLU_113736_1_1_6"/>
<dbReference type="Proteomes" id="UP000001410">
    <property type="component" value="Chromosome"/>
</dbReference>
<dbReference type="GO" id="GO:0005886">
    <property type="term" value="C:plasma membrane"/>
    <property type="evidence" value="ECO:0007669"/>
    <property type="project" value="UniProtKB-SubCell"/>
</dbReference>
<dbReference type="HAMAP" id="MF_01144">
    <property type="entry name" value="UPF0299"/>
    <property type="match status" value="1"/>
</dbReference>
<dbReference type="InterPro" id="IPR005538">
    <property type="entry name" value="LrgA/CidA"/>
</dbReference>
<dbReference type="InterPro" id="IPR022957">
    <property type="entry name" value="Uncharacterised_UPF0299"/>
</dbReference>
<dbReference type="NCBIfam" id="NF002494">
    <property type="entry name" value="PRK01821.1"/>
    <property type="match status" value="1"/>
</dbReference>
<dbReference type="PANTHER" id="PTHR33931">
    <property type="entry name" value="HOLIN-LIKE PROTEIN CIDA-RELATED"/>
    <property type="match status" value="1"/>
</dbReference>
<dbReference type="PANTHER" id="PTHR33931:SF5">
    <property type="entry name" value="UPF0299 MEMBRANE PROTEIN YOHJ"/>
    <property type="match status" value="1"/>
</dbReference>
<dbReference type="Pfam" id="PF03788">
    <property type="entry name" value="LrgA"/>
    <property type="match status" value="1"/>
</dbReference>
<comment type="subcellular location">
    <subcellularLocation>
        <location evidence="1">Cell inner membrane</location>
        <topology evidence="1">Multi-pass membrane protein</topology>
    </subcellularLocation>
</comment>
<comment type="similarity">
    <text evidence="3">Belongs to the UPF0299 family.</text>
</comment>
<comment type="sequence caution" evidence="3">
    <conflict type="erroneous initiation">
        <sequence resource="EMBL-CDS" id="AAN81129"/>
    </conflict>
</comment>
<feature type="chain" id="PRO_0000072807" description="UPF0299 membrane protein YohJ">
    <location>
        <begin position="1"/>
        <end position="132"/>
    </location>
</feature>
<feature type="topological domain" description="Periplasmic" evidence="2">
    <location>
        <begin position="1"/>
        <end position="6"/>
    </location>
</feature>
<feature type="transmembrane region" description="Helical" evidence="2">
    <location>
        <begin position="7"/>
        <end position="27"/>
    </location>
</feature>
<feature type="topological domain" description="Cytoplasmic" evidence="2">
    <location>
        <begin position="28"/>
        <end position="30"/>
    </location>
</feature>
<feature type="transmembrane region" description="Helical" evidence="2">
    <location>
        <begin position="31"/>
        <end position="51"/>
    </location>
</feature>
<feature type="topological domain" description="Periplasmic" evidence="2">
    <location>
        <begin position="52"/>
        <end position="62"/>
    </location>
</feature>
<feature type="transmembrane region" description="Helical" evidence="2">
    <location>
        <begin position="63"/>
        <end position="83"/>
    </location>
</feature>
<feature type="topological domain" description="Cytoplasmic" evidence="2">
    <location>
        <begin position="84"/>
        <end position="92"/>
    </location>
</feature>
<feature type="transmembrane region" description="Helical" evidence="2">
    <location>
        <begin position="93"/>
        <end position="113"/>
    </location>
</feature>
<feature type="topological domain" description="Periplasmic" evidence="2">
    <location>
        <begin position="114"/>
        <end position="132"/>
    </location>
</feature>
<accession>P60633</accession>
<accession>P33372</accession>
<name>YOHJ_ECOL6</name>
<keyword id="KW-0997">Cell inner membrane</keyword>
<keyword id="KW-1003">Cell membrane</keyword>
<keyword id="KW-0472">Membrane</keyword>
<keyword id="KW-1185">Reference proteome</keyword>
<keyword id="KW-0812">Transmembrane</keyword>
<keyword id="KW-1133">Transmembrane helix</keyword>
<sequence>MSKTLNIIWQYLRAFVLIYACLYAGIFIASLLPVTIPGSIIGMLILFVLLALQILPAKWVNPGCYVLIRYMALLFVPIGVGVMQYFDLLRAQFGPVVVSCAVSTLVVFLVVSWSSQLVHGERKVVGQKGSEE</sequence>
<reference key="1">
    <citation type="journal article" date="2002" name="Proc. Natl. Acad. Sci. U.S.A.">
        <title>Extensive mosaic structure revealed by the complete genome sequence of uropathogenic Escherichia coli.</title>
        <authorList>
            <person name="Welch R.A."/>
            <person name="Burland V."/>
            <person name="Plunkett G. III"/>
            <person name="Redford P."/>
            <person name="Roesch P."/>
            <person name="Rasko D."/>
            <person name="Buckles E.L."/>
            <person name="Liou S.-R."/>
            <person name="Boutin A."/>
            <person name="Hackett J."/>
            <person name="Stroud D."/>
            <person name="Mayhew G.F."/>
            <person name="Rose D.J."/>
            <person name="Zhou S."/>
            <person name="Schwartz D.C."/>
            <person name="Perna N.T."/>
            <person name="Mobley H.L.T."/>
            <person name="Donnenberg M.S."/>
            <person name="Blattner F.R."/>
        </authorList>
    </citation>
    <scope>NUCLEOTIDE SEQUENCE [LARGE SCALE GENOMIC DNA]</scope>
    <source>
        <strain>CFT073 / ATCC 700928 / UPEC</strain>
    </source>
</reference>
<evidence type="ECO:0000250" key="1"/>
<evidence type="ECO:0000255" key="2"/>
<evidence type="ECO:0000305" key="3"/>
<protein>
    <recommendedName>
        <fullName>UPF0299 membrane protein YohJ</fullName>
    </recommendedName>
</protein>
<organism>
    <name type="scientific">Escherichia coli O6:H1 (strain CFT073 / ATCC 700928 / UPEC)</name>
    <dbReference type="NCBI Taxonomy" id="199310"/>
    <lineage>
        <taxon>Bacteria</taxon>
        <taxon>Pseudomonadati</taxon>
        <taxon>Pseudomonadota</taxon>
        <taxon>Gammaproteobacteria</taxon>
        <taxon>Enterobacterales</taxon>
        <taxon>Enterobacteriaceae</taxon>
        <taxon>Escherichia</taxon>
    </lineage>
</organism>